<proteinExistence type="evidence at transcript level"/>
<name>COHA1_CHICK</name>
<comment type="function">
    <text evidence="1">May play a role in the integrity of hemidesmosome and the attachment of basal keratinocytes to the underlying basement membrane.</text>
</comment>
<comment type="function">
    <text evidence="1">The 120 kDa linear IgA disease antigen homolog is an anchoring filament component involved in dermal-epidermal cohesion.</text>
</comment>
<comment type="subunit">
    <text evidence="1">Homotrimers of alpha 1(XVII)chains.</text>
</comment>
<comment type="subcellular location">
    <subcellularLocation>
        <location>Cell junction</location>
        <location>Hemidesmosome</location>
    </subcellularLocation>
    <subcellularLocation>
        <location>Membrane</location>
        <topology>Single-pass type II membrane protein</topology>
    </subcellularLocation>
    <text evidence="1">Localized along the plasma membrane of the hemidesmosome.</text>
</comment>
<comment type="subcellular location">
    <molecule>120 kDa linear IgA disease antigen homolog</molecule>
    <subcellularLocation>
        <location evidence="1">Secreted</location>
        <location evidence="1">Extracellular space</location>
        <location evidence="1">Extracellular matrix</location>
        <location evidence="1">Basement membrane</location>
    </subcellularLocation>
</comment>
<comment type="tissue specificity">
    <text evidence="4">Cornea specific.</text>
</comment>
<comment type="PTM">
    <text evidence="1">The intracellular/endo domain is disulfide-linked.</text>
</comment>
<comment type="PTM">
    <text>Prolines at the third position of the tripeptide repeating unit (G-X-Y) are hydroxylated in some or all of the chains.</text>
</comment>
<comment type="PTM">
    <text evidence="1">The ectodomain is shedded from the surface of keratinocytes resulting in a 120-kDa soluble form, also named as 120 kDa linear IgA disease antigen homolog. The shedding is mediated by membrane-bound metalloproteases (By similarity).</text>
</comment>
<comment type="sequence caution" evidence="5">
    <conflict type="frameshift">
        <sequence resource="EMBL-CDS" id="AAA48703"/>
    </conflict>
</comment>
<reference key="1">
    <citation type="journal article" date="2004" name="Nature">
        <title>Sequence and comparative analysis of the chicken genome provide unique perspectives on vertebrate evolution.</title>
        <authorList>
            <person name="Hillier L.W."/>
            <person name="Miller W."/>
            <person name="Birney E."/>
            <person name="Warren W."/>
            <person name="Hardison R.C."/>
            <person name="Ponting C.P."/>
            <person name="Bork P."/>
            <person name="Burt D.W."/>
            <person name="Groenen M.A.M."/>
            <person name="Delany M.E."/>
            <person name="Dodgson J.B."/>
            <person name="Chinwalla A.T."/>
            <person name="Cliften P.F."/>
            <person name="Clifton S.W."/>
            <person name="Delehaunty K.D."/>
            <person name="Fronick C."/>
            <person name="Fulton R.S."/>
            <person name="Graves T.A."/>
            <person name="Kremitzki C."/>
            <person name="Layman D."/>
            <person name="Magrini V."/>
            <person name="McPherson J.D."/>
            <person name="Miner T.L."/>
            <person name="Minx P."/>
            <person name="Nash W.E."/>
            <person name="Nhan M.N."/>
            <person name="Nelson J.O."/>
            <person name="Oddy L.G."/>
            <person name="Pohl C.S."/>
            <person name="Randall-Maher J."/>
            <person name="Smith S.M."/>
            <person name="Wallis J.W."/>
            <person name="Yang S.-P."/>
            <person name="Romanov M.N."/>
            <person name="Rondelli C.M."/>
            <person name="Paton B."/>
            <person name="Smith J."/>
            <person name="Morrice D."/>
            <person name="Daniels L."/>
            <person name="Tempest H.G."/>
            <person name="Robertson L."/>
            <person name="Masabanda J.S."/>
            <person name="Griffin D.K."/>
            <person name="Vignal A."/>
            <person name="Fillon V."/>
            <person name="Jacobbson L."/>
            <person name="Kerje S."/>
            <person name="Andersson L."/>
            <person name="Crooijmans R.P."/>
            <person name="Aerts J."/>
            <person name="van der Poel J.J."/>
            <person name="Ellegren H."/>
            <person name="Caldwell R.B."/>
            <person name="Hubbard S.J."/>
            <person name="Grafham D.V."/>
            <person name="Kierzek A.M."/>
            <person name="McLaren S.R."/>
            <person name="Overton I.M."/>
            <person name="Arakawa H."/>
            <person name="Beattie K.J."/>
            <person name="Bezzubov Y."/>
            <person name="Boardman P.E."/>
            <person name="Bonfield J.K."/>
            <person name="Croning M.D.R."/>
            <person name="Davies R.M."/>
            <person name="Francis M.D."/>
            <person name="Humphray S.J."/>
            <person name="Scott C.E."/>
            <person name="Taylor R.G."/>
            <person name="Tickle C."/>
            <person name="Brown W.R.A."/>
            <person name="Rogers J."/>
            <person name="Buerstedde J.-M."/>
            <person name="Wilson S.A."/>
            <person name="Stubbs L."/>
            <person name="Ovcharenko I."/>
            <person name="Gordon L."/>
            <person name="Lucas S."/>
            <person name="Miller M.M."/>
            <person name="Inoko H."/>
            <person name="Shiina T."/>
            <person name="Kaufman J."/>
            <person name="Salomonsen J."/>
            <person name="Skjoedt K."/>
            <person name="Wong G.K.-S."/>
            <person name="Wang J."/>
            <person name="Liu B."/>
            <person name="Wang J."/>
            <person name="Yu J."/>
            <person name="Yang H."/>
            <person name="Nefedov M."/>
            <person name="Koriabine M."/>
            <person name="Dejong P.J."/>
            <person name="Goodstadt L."/>
            <person name="Webber C."/>
            <person name="Dickens N.J."/>
            <person name="Letunic I."/>
            <person name="Suyama M."/>
            <person name="Torrents D."/>
            <person name="von Mering C."/>
            <person name="Zdobnov E.M."/>
            <person name="Makova K."/>
            <person name="Nekrutenko A."/>
            <person name="Elnitski L."/>
            <person name="Eswara P."/>
            <person name="King D.C."/>
            <person name="Yang S.-P."/>
            <person name="Tyekucheva S."/>
            <person name="Radakrishnan A."/>
            <person name="Harris R.S."/>
            <person name="Chiaromonte F."/>
            <person name="Taylor J."/>
            <person name="He J."/>
            <person name="Rijnkels M."/>
            <person name="Griffiths-Jones S."/>
            <person name="Ureta-Vidal A."/>
            <person name="Hoffman M.M."/>
            <person name="Severin J."/>
            <person name="Searle S.M.J."/>
            <person name="Law A.S."/>
            <person name="Speed D."/>
            <person name="Waddington D."/>
            <person name="Cheng Z."/>
            <person name="Tuzun E."/>
            <person name="Eichler E."/>
            <person name="Bao Z."/>
            <person name="Flicek P."/>
            <person name="Shteynberg D.D."/>
            <person name="Brent M.R."/>
            <person name="Bye J.M."/>
            <person name="Huckle E.J."/>
            <person name="Chatterji S."/>
            <person name="Dewey C."/>
            <person name="Pachter L."/>
            <person name="Kouranov A."/>
            <person name="Mourelatos Z."/>
            <person name="Hatzigeorgiou A.G."/>
            <person name="Paterson A.H."/>
            <person name="Ivarie R."/>
            <person name="Brandstrom M."/>
            <person name="Axelsson E."/>
            <person name="Backstrom N."/>
            <person name="Berlin S."/>
            <person name="Webster M.T."/>
            <person name="Pourquie O."/>
            <person name="Reymond A."/>
            <person name="Ucla C."/>
            <person name="Antonarakis S.E."/>
            <person name="Long M."/>
            <person name="Emerson J.J."/>
            <person name="Betran E."/>
            <person name="Dupanloup I."/>
            <person name="Kaessmann H."/>
            <person name="Hinrichs A.S."/>
            <person name="Bejerano G."/>
            <person name="Furey T.S."/>
            <person name="Harte R.A."/>
            <person name="Raney B."/>
            <person name="Siepel A."/>
            <person name="Kent W.J."/>
            <person name="Haussler D."/>
            <person name="Eyras E."/>
            <person name="Castelo R."/>
            <person name="Abril J.F."/>
            <person name="Castellano S."/>
            <person name="Camara F."/>
            <person name="Parra G."/>
            <person name="Guigo R."/>
            <person name="Bourque G."/>
            <person name="Tesler G."/>
            <person name="Pevzner P.A."/>
            <person name="Smit A."/>
            <person name="Fulton L.A."/>
            <person name="Mardis E.R."/>
            <person name="Wilson R.K."/>
        </authorList>
    </citation>
    <scope>NUCLEOTIDE SEQUENCE [LARGE SCALE GENOMIC DNA]</scope>
    <source>
        <strain>Red jungle fowl</strain>
    </source>
</reference>
<reference key="2">
    <citation type="journal article" date="1991" name="Proc. Natl. Acad. Sci. U.S.A.">
        <title>cDNA analysis predicts a cornea-specific collagen.</title>
        <authorList>
            <person name="Marchant J.K."/>
            <person name="Linsenmayer T.F."/>
            <person name="Gordon M.K."/>
        </authorList>
    </citation>
    <scope>NUCLEOTIDE SEQUENCE [MRNA] OF 384-1495</scope>
    <scope>TISSUE SPECIFICITY</scope>
    <source>
        <tissue>Cornea</tissue>
    </source>
</reference>
<protein>
    <recommendedName>
        <fullName>Collagen alpha-1(XVII) chain</fullName>
    </recommendedName>
    <alternativeName>
        <fullName>180 kDa bullous pemphigoid antigen 2</fullName>
    </alternativeName>
    <alternativeName>
        <fullName>Bullous pemphigoid antigen 2</fullName>
    </alternativeName>
    <component>
        <recommendedName>
            <fullName>120 kDa linear IgA disease antigen homolog</fullName>
        </recommendedName>
    </component>
</protein>
<keyword id="KW-0084">Basement membrane</keyword>
<keyword id="KW-0965">Cell junction</keyword>
<keyword id="KW-0176">Collagen</keyword>
<keyword id="KW-1015">Disulfide bond</keyword>
<keyword id="KW-0272">Extracellular matrix</keyword>
<keyword id="KW-0325">Glycoprotein</keyword>
<keyword id="KW-0379">Hydroxylation</keyword>
<keyword id="KW-0472">Membrane</keyword>
<keyword id="KW-0597">Phosphoprotein</keyword>
<keyword id="KW-1185">Reference proteome</keyword>
<keyword id="KW-0677">Repeat</keyword>
<keyword id="KW-0964">Secreted</keyword>
<keyword id="KW-0735">Signal-anchor</keyword>
<keyword id="KW-0812">Transmembrane</keyword>
<keyword id="KW-1133">Transmembrane helix</keyword>
<sequence>MDSVTKKTRQDGSEVTERQGGSSSGLKTSSHTGGSGVEKRSYTHSSGYVTSSGSGRLNSSSSGYRQTQSPSSTLTKSPGSTFERKTYVNRHATYEGSSSANSSPEFPRKEFASASTRGRSQSRESEIRVRLQSASPSGRWTELDDVKRLLKGSRSASCSPTRSSSSTLPIPKKAVVETKMVTESSQSVSGTYDTTILNTTLPPYTWSSTLPAGSSLGGYHNSMGQSSSLINAMSHSTGSVFGVPNNLAPSSHALNTGLSTSSTVFGVQNNLSPSSSALNASAASAAYGMKNTSQTNTMNSTGVSASAGGTILSSQGDDFLHKDCKFLLLEKENAPAKKEMELLVMTKDSGKVFSASSTGLNGGSFAEDTLKKEKQGLSSYAADTGLKSDANGGLKSAPTRDKATYAEIQNGGAGGAIGSAPSWCPCGSCCSWWKWLLGLLLAWLLLLGLLFGLIALAEEVRKLKSRVDNLEKINHSFLTVNQGNPYLEKDVSKVDFLHGVAPSSTFPFENEESVWLMVKSRLNKEIERGYFRGERGEPGMKGDMGLQGPKGDRGLPGVPGIPGPVGHQGPEGPKGQKGSMGDPGMEGPMGQRGREGLPGPRGEPGPPGFGEKGDRGAAGPPGPPGPPGSAGLKGPMGSPGPQGPPGPPGLQGFRGEAGLPGAKGEKGATGPPGPKGDQGEKGARGMTGEQGSRGIPGPPGEPGAKGPAGQAGRDGQPGERGEPGLMGMPGARGPPGPSGDTGEPGLTGPQGPPGLPGNPGRPGAKGEPGAPGKVISAEGSSTIALPGPPGPPGPIGPTGPPGVPGPVGPAGLPGQQGPRGEKGSAGEVVIETIKTEVSSLASQMLSDLQGRAGPPGPPGPPGESVQGLPGPRGPPGLPGPSGPPGRPGSSVSTSETFVSGPPGPPGPPGPKGDQGEPGPRGFTGEPGEPGLPGFSSHGGTVTMQGPPGPPGPPGPKGDAGVPGAPGIPGTSRGGSRQIQGPPGPPGPPGPPGPGGSSSQEIQQYVADYLKSDNVRHYLTGVQGPPGPPGPPGILTTADGKNFDFAELATRVMSYVTSSSDHYQSFASSVSTTSVLYQELLNMLQREEIRQYLVGPRGPPGPPGPGVDGMSLSLDYDELTRRFISYLTSSGMSIGLPGPPGPPGTPGISYSELTAYLRNSEFSGLVGPPGPAGPPGPPGIPGSSGISLEDISAYLQSVGYSSISGIQGPPGPPGPPGPPGFSGTGLLSYADITHSDEFRSELIQYLKSDEVRSYISGPPGPPGPRGPPGPKGDSGLVAGSMSSLYHDSLASERLHGGSIGAEGSHGGSLGASSSYGSSMSSSMSSYSASMGSDGSYGASVGSDGSFDGLLTAEESHRRSAGPGRSYSSSFTGSLDYNELARHVSENLQSRGILQDLMSYTGQGPPGPPGPPGPPGISRVFAAYGNVTEDLMDFFRTHGTVRGPPGEKGERGYPGPKGDPGPMGPPGRHGQRGPKGEKGEKGEQMYSGRRRRRSVGV</sequence>
<dbReference type="EMBL" id="M60172">
    <property type="protein sequence ID" value="AAA48703.1"/>
    <property type="status" value="ALT_FRAME"/>
    <property type="molecule type" value="mRNA"/>
</dbReference>
<dbReference type="PIR" id="S16501">
    <property type="entry name" value="A38587"/>
</dbReference>
<dbReference type="RefSeq" id="NP_001292131.1">
    <property type="nucleotide sequence ID" value="NM_001305202.1"/>
</dbReference>
<dbReference type="FunCoup" id="Q90584">
    <property type="interactions" value="23"/>
</dbReference>
<dbReference type="STRING" id="9031.ENSGALP00000044395"/>
<dbReference type="GlyCosmos" id="Q90584">
    <property type="glycosylation" value="1 site, No reported glycans"/>
</dbReference>
<dbReference type="GlyGen" id="Q90584">
    <property type="glycosylation" value="3 sites"/>
</dbReference>
<dbReference type="PaxDb" id="9031-ENSGALP00000038357"/>
<dbReference type="GeneID" id="396503"/>
<dbReference type="KEGG" id="gga:396503"/>
<dbReference type="CTD" id="1308"/>
<dbReference type="VEuPathDB" id="HostDB:geneid_396503"/>
<dbReference type="eggNOG" id="KOG3544">
    <property type="taxonomic scope" value="Eukaryota"/>
</dbReference>
<dbReference type="HOGENOM" id="CLU_004285_0_0_1"/>
<dbReference type="InParanoid" id="Q90584"/>
<dbReference type="OrthoDB" id="9950082at2759"/>
<dbReference type="PhylomeDB" id="Q90584"/>
<dbReference type="Reactome" id="R-GGA-1650814">
    <property type="pathway name" value="Collagen biosynthesis and modifying enzymes"/>
</dbReference>
<dbReference type="Reactome" id="R-GGA-8948216">
    <property type="pathway name" value="Collagen chain trimerization"/>
</dbReference>
<dbReference type="PRO" id="PR:Q90584"/>
<dbReference type="Proteomes" id="UP000000539">
    <property type="component" value="Chromosome 6"/>
</dbReference>
<dbReference type="Bgee" id="ENSGALG00000029617">
    <property type="expression patterns" value="Expressed in colon and 3 other cell types or tissues"/>
</dbReference>
<dbReference type="GO" id="GO:0005604">
    <property type="term" value="C:basement membrane"/>
    <property type="evidence" value="ECO:0007669"/>
    <property type="project" value="UniProtKB-SubCell"/>
</dbReference>
<dbReference type="GO" id="GO:0005581">
    <property type="term" value="C:collagen trimer"/>
    <property type="evidence" value="ECO:0007669"/>
    <property type="project" value="UniProtKB-KW"/>
</dbReference>
<dbReference type="GO" id="GO:0062023">
    <property type="term" value="C:collagen-containing extracellular matrix"/>
    <property type="evidence" value="ECO:0000318"/>
    <property type="project" value="GO_Central"/>
</dbReference>
<dbReference type="GO" id="GO:0005615">
    <property type="term" value="C:extracellular space"/>
    <property type="evidence" value="ECO:0000318"/>
    <property type="project" value="GO_Central"/>
</dbReference>
<dbReference type="GO" id="GO:0030056">
    <property type="term" value="C:hemidesmosome"/>
    <property type="evidence" value="ECO:0007669"/>
    <property type="project" value="UniProtKB-SubCell"/>
</dbReference>
<dbReference type="GO" id="GO:0016020">
    <property type="term" value="C:membrane"/>
    <property type="evidence" value="ECO:0007669"/>
    <property type="project" value="UniProtKB-SubCell"/>
</dbReference>
<dbReference type="GO" id="GO:0030020">
    <property type="term" value="F:extracellular matrix structural constituent conferring tensile strength"/>
    <property type="evidence" value="ECO:0000318"/>
    <property type="project" value="GO_Central"/>
</dbReference>
<dbReference type="FunFam" id="1.20.5.320:FF:000003">
    <property type="entry name" value="Collagen, type XVII, alpha 1"/>
    <property type="match status" value="1"/>
</dbReference>
<dbReference type="Gene3D" id="1.20.5.320">
    <property type="entry name" value="6-Phosphogluconate Dehydrogenase, domain 3"/>
    <property type="match status" value="4"/>
</dbReference>
<dbReference type="InterPro" id="IPR008160">
    <property type="entry name" value="Collagen"/>
</dbReference>
<dbReference type="InterPro" id="IPR050149">
    <property type="entry name" value="Collagen_superfamily"/>
</dbReference>
<dbReference type="PANTHER" id="PTHR24023">
    <property type="entry name" value="COLLAGEN ALPHA"/>
    <property type="match status" value="1"/>
</dbReference>
<dbReference type="PANTHER" id="PTHR24023:SF1082">
    <property type="entry name" value="COLLAGEN TRIPLE HELIX REPEAT"/>
    <property type="match status" value="1"/>
</dbReference>
<dbReference type="Pfam" id="PF01391">
    <property type="entry name" value="Collagen"/>
    <property type="match status" value="6"/>
</dbReference>
<accession>Q90584</accession>
<feature type="chain" id="PRO_0000059409" description="Collagen alpha-1(XVII) chain">
    <location>
        <begin position="1"/>
        <end position="1495"/>
    </location>
</feature>
<feature type="chain" id="PRO_0000342559" description="120 kDa linear IgA disease antigen homolog" evidence="1">
    <location>
        <begin position="497"/>
        <end position="1495"/>
    </location>
</feature>
<feature type="topological domain" description="Cytoplasmic" evidence="2">
    <location>
        <begin position="1"/>
        <end position="435"/>
    </location>
</feature>
<feature type="transmembrane region" description="Helical; Signal-anchor for type II membrane protein" evidence="2">
    <location>
        <begin position="436"/>
        <end position="456"/>
    </location>
</feature>
<feature type="topological domain" description="Extracellular" evidence="2">
    <location>
        <begin position="457"/>
        <end position="1495"/>
    </location>
</feature>
<feature type="region of interest" description="Nonhelical region (NC16)">
    <location>
        <begin position="1"/>
        <end position="535"/>
    </location>
</feature>
<feature type="region of interest" description="Disordered" evidence="3">
    <location>
        <begin position="1"/>
        <end position="138"/>
    </location>
</feature>
<feature type="region of interest" description="Disordered" evidence="3">
    <location>
        <begin position="532"/>
        <end position="824"/>
    </location>
</feature>
<feature type="region of interest" description="Triple-helical region">
    <location>
        <begin position="536"/>
        <end position="1482"/>
    </location>
</feature>
<feature type="region of interest" description="Disordered" evidence="3">
    <location>
        <begin position="847"/>
        <end position="999"/>
    </location>
</feature>
<feature type="region of interest" description="Disordered" evidence="3">
    <location>
        <begin position="1160"/>
        <end position="1185"/>
    </location>
</feature>
<feature type="region of interest" description="Disordered" evidence="3">
    <location>
        <begin position="1201"/>
        <end position="1226"/>
    </location>
</feature>
<feature type="region of interest" description="Disordered" evidence="3">
    <location>
        <begin position="1251"/>
        <end position="1278"/>
    </location>
</feature>
<feature type="region of interest" description="Disordered" evidence="3">
    <location>
        <begin position="1295"/>
        <end position="1336"/>
    </location>
</feature>
<feature type="region of interest" description="Disordered" evidence="3">
    <location>
        <begin position="1396"/>
        <end position="1416"/>
    </location>
</feature>
<feature type="region of interest" description="Disordered" evidence="3">
    <location>
        <begin position="1435"/>
        <end position="1495"/>
    </location>
</feature>
<feature type="region of interest" description="Nonhelical region (NC1)">
    <location>
        <begin position="1483"/>
        <end position="1495"/>
    </location>
</feature>
<feature type="compositionally biased region" description="Basic and acidic residues" evidence="3">
    <location>
        <begin position="1"/>
        <end position="17"/>
    </location>
</feature>
<feature type="compositionally biased region" description="Polar residues" evidence="3">
    <location>
        <begin position="19"/>
        <end position="32"/>
    </location>
</feature>
<feature type="compositionally biased region" description="Low complexity" evidence="3">
    <location>
        <begin position="51"/>
        <end position="63"/>
    </location>
</feature>
<feature type="compositionally biased region" description="Polar residues" evidence="3">
    <location>
        <begin position="64"/>
        <end position="80"/>
    </location>
</feature>
<feature type="compositionally biased region" description="Polar residues" evidence="3">
    <location>
        <begin position="95"/>
        <end position="104"/>
    </location>
</feature>
<feature type="compositionally biased region" description="Low complexity" evidence="3">
    <location>
        <begin position="702"/>
        <end position="711"/>
    </location>
</feature>
<feature type="compositionally biased region" description="Low complexity" evidence="3">
    <location>
        <begin position="761"/>
        <end position="773"/>
    </location>
</feature>
<feature type="compositionally biased region" description="Pro residues" evidence="3">
    <location>
        <begin position="786"/>
        <end position="807"/>
    </location>
</feature>
<feature type="compositionally biased region" description="Low complexity" evidence="3">
    <location>
        <begin position="809"/>
        <end position="818"/>
    </location>
</feature>
<feature type="compositionally biased region" description="Pro residues" evidence="3">
    <location>
        <begin position="871"/>
        <end position="886"/>
    </location>
</feature>
<feature type="compositionally biased region" description="Pro residues" evidence="3">
    <location>
        <begin position="901"/>
        <end position="910"/>
    </location>
</feature>
<feature type="compositionally biased region" description="Pro residues" evidence="3">
    <location>
        <begin position="946"/>
        <end position="955"/>
    </location>
</feature>
<feature type="compositionally biased region" description="Pro residues" evidence="3">
    <location>
        <begin position="981"/>
        <end position="993"/>
    </location>
</feature>
<feature type="compositionally biased region" description="Pro residues" evidence="3">
    <location>
        <begin position="1167"/>
        <end position="1179"/>
    </location>
</feature>
<feature type="compositionally biased region" description="Pro residues" evidence="3">
    <location>
        <begin position="1208"/>
        <end position="1218"/>
    </location>
</feature>
<feature type="compositionally biased region" description="Pro residues" evidence="3">
    <location>
        <begin position="1257"/>
        <end position="1269"/>
    </location>
</feature>
<feature type="compositionally biased region" description="Gly residues" evidence="3">
    <location>
        <begin position="1296"/>
        <end position="1308"/>
    </location>
</feature>
<feature type="compositionally biased region" description="Low complexity" evidence="3">
    <location>
        <begin position="1309"/>
        <end position="1336"/>
    </location>
</feature>
<feature type="compositionally biased region" description="Pro residues" evidence="3">
    <location>
        <begin position="1403"/>
        <end position="1413"/>
    </location>
</feature>
<feature type="compositionally biased region" description="Basic and acidic residues" evidence="3">
    <location>
        <begin position="1472"/>
        <end position="1481"/>
    </location>
</feature>
<feature type="compositionally biased region" description="Basic residues" evidence="3">
    <location>
        <begin position="1486"/>
        <end position="1495"/>
    </location>
</feature>
<feature type="glycosylation site" description="N-linked (GlcNAc...) asparagine" evidence="2">
    <location>
        <position position="1424"/>
    </location>
</feature>
<feature type="sequence conflict" description="In Ref. 2; AAA48703." evidence="5" ref="2">
    <original>T</original>
    <variation>P</variation>
    <location>
        <position position="384"/>
    </location>
</feature>
<feature type="sequence conflict" description="In Ref. 2; AAA48703." evidence="5" ref="2">
    <original>A</original>
    <variation>P</variation>
    <location>
        <position position="617"/>
    </location>
</feature>
<feature type="sequence conflict" description="In Ref. 2; AAA48703." evidence="5" ref="2">
    <original>R</original>
    <variation>H</variation>
    <location>
        <position position="684"/>
    </location>
</feature>
<feature type="sequence conflict" description="In Ref. 2; AAA48703." evidence="5" ref="2">
    <original>M</original>
    <variation>I</variation>
    <location>
        <position position="728"/>
    </location>
</feature>
<feature type="sequence conflict" description="In Ref. 2; AAA48703." evidence="5" ref="2">
    <original>G</original>
    <variation>V</variation>
    <location>
        <position position="826"/>
    </location>
</feature>
<feature type="sequence conflict" description="In Ref. 2; AAA48703." evidence="5" ref="2">
    <original>I</original>
    <variation>T</variation>
    <location>
        <position position="1185"/>
    </location>
</feature>
<feature type="sequence conflict" description="In Ref. 2; AAA48703." evidence="5" ref="2">
    <original>P</original>
    <variation>S</variation>
    <location>
        <position position="1260"/>
    </location>
</feature>
<feature type="sequence conflict" description="In Ref. 2; AAA48703." evidence="5" ref="2">
    <original>R</original>
    <variation>P</variation>
    <location>
        <position position="1264"/>
    </location>
</feature>
<feature type="sequence conflict" description="In Ref. 2; AAA48703." evidence="5" ref="2">
    <original>S</original>
    <variation>T</variation>
    <location>
        <position position="1311"/>
    </location>
</feature>
<feature type="sequence conflict" description="In Ref. 2; AAA48703." evidence="5" ref="2">
    <location>
        <position position="1463"/>
    </location>
</feature>
<feature type="sequence conflict" description="In Ref. 2; AAA48703." evidence="5" ref="2">
    <location>
        <position position="1469"/>
    </location>
</feature>
<organism>
    <name type="scientific">Gallus gallus</name>
    <name type="common">Chicken</name>
    <dbReference type="NCBI Taxonomy" id="9031"/>
    <lineage>
        <taxon>Eukaryota</taxon>
        <taxon>Metazoa</taxon>
        <taxon>Chordata</taxon>
        <taxon>Craniata</taxon>
        <taxon>Vertebrata</taxon>
        <taxon>Euteleostomi</taxon>
        <taxon>Archelosauria</taxon>
        <taxon>Archosauria</taxon>
        <taxon>Dinosauria</taxon>
        <taxon>Saurischia</taxon>
        <taxon>Theropoda</taxon>
        <taxon>Coelurosauria</taxon>
        <taxon>Aves</taxon>
        <taxon>Neognathae</taxon>
        <taxon>Galloanserae</taxon>
        <taxon>Galliformes</taxon>
        <taxon>Phasianidae</taxon>
        <taxon>Phasianinae</taxon>
        <taxon>Gallus</taxon>
    </lineage>
</organism>
<evidence type="ECO:0000250" key="1"/>
<evidence type="ECO:0000255" key="2"/>
<evidence type="ECO:0000256" key="3">
    <source>
        <dbReference type="SAM" id="MobiDB-lite"/>
    </source>
</evidence>
<evidence type="ECO:0000269" key="4">
    <source>
    </source>
</evidence>
<evidence type="ECO:0000305" key="5"/>
<gene>
    <name type="primary">COL17A1</name>
    <name type="synonym">BP180</name>
    <name type="synonym">BPAG2</name>
</gene>